<gene>
    <name type="primary">gnrh3</name>
</gene>
<comment type="function">
    <text>Stimulates the secretion of gonadotropins.</text>
</comment>
<comment type="subcellular location">
    <subcellularLocation>
        <location>Secreted</location>
    </subcellularLocation>
</comment>
<comment type="tissue specificity">
    <text>Brain.</text>
</comment>
<comment type="similarity">
    <text evidence="2">Belongs to the GnRH family.</text>
</comment>
<evidence type="ECO:0000250" key="1"/>
<evidence type="ECO:0000305" key="2"/>
<protein>
    <recommendedName>
        <fullName>Progonadoliberin-3</fullName>
    </recommendedName>
    <alternativeName>
        <fullName>Progonadoliberin III</fullName>
    </alternativeName>
    <component>
        <recommendedName>
            <fullName>Gonadoliberin-3</fullName>
        </recommendedName>
        <alternativeName>
            <fullName>Gonadoliberin III</fullName>
        </alternativeName>
        <alternativeName>
            <fullName>Gonadotropin-releasing hormone III</fullName>
            <shortName>GnRH III</shortName>
        </alternativeName>
        <alternativeName>
            <fullName>Luliberin III</fullName>
        </alternativeName>
        <alternativeName>
            <fullName>Luteinizing hormone-releasing hormone III</fullName>
            <shortName>LH-RH III</shortName>
        </alternativeName>
    </component>
    <component>
        <recommendedName>
            <fullName>GnRH-associated peptide 3</fullName>
        </recommendedName>
        <alternativeName>
            <fullName>GnRH-associated peptide III</fullName>
        </alternativeName>
    </component>
</protein>
<keyword id="KW-0027">Amidation</keyword>
<keyword id="KW-0165">Cleavage on pair of basic residues</keyword>
<keyword id="KW-0372">Hormone</keyword>
<keyword id="KW-0873">Pyrrolidone carboxylic acid</keyword>
<keyword id="KW-0964">Secreted</keyword>
<keyword id="KW-0732">Signal</keyword>
<name>GON3_SALFO</name>
<sequence length="82" mass="9143">MDLSNRTVVQVVVLALVAQVTLSQHWSYGWLPGGKRSVGELEATIKMMDTGGVVALPEETSAHVSERLRPYDVILKKWMPHK</sequence>
<organism>
    <name type="scientific">Salvelinus fontinalis</name>
    <name type="common">Brook trout</name>
    <name type="synonym">Salmo fontinalis</name>
    <dbReference type="NCBI Taxonomy" id="8038"/>
    <lineage>
        <taxon>Eukaryota</taxon>
        <taxon>Metazoa</taxon>
        <taxon>Chordata</taxon>
        <taxon>Craniata</taxon>
        <taxon>Vertebrata</taxon>
        <taxon>Euteleostomi</taxon>
        <taxon>Actinopterygii</taxon>
        <taxon>Neopterygii</taxon>
        <taxon>Teleostei</taxon>
        <taxon>Protacanthopterygii</taxon>
        <taxon>Salmoniformes</taxon>
        <taxon>Salmonidae</taxon>
        <taxon>Salmoninae</taxon>
        <taxon>Salvelinus</taxon>
    </lineage>
</organism>
<reference key="1">
    <citation type="journal article" date="1992" name="Mol. Cell. Endocrinol.">
        <title>The Atlantic salmon prepro-gonadotropin releasing hormone gene and mRNA.</title>
        <authorList>
            <person name="Klungland H."/>
            <person name="Lorens J.B."/>
            <person name="Andersen O."/>
            <person name="Kisen G.O."/>
            <person name="Alestroem P."/>
        </authorList>
    </citation>
    <scope>NUCLEOTIDE SEQUENCE [GENOMIC DNA]</scope>
    <source>
        <tissue>Hypothalamus</tissue>
    </source>
</reference>
<proteinExistence type="evidence at transcript level"/>
<feature type="signal peptide" evidence="1">
    <location>
        <begin position="1"/>
        <end position="23"/>
    </location>
</feature>
<feature type="chain" id="PRO_0000012535" description="Progonadoliberin-3">
    <location>
        <begin position="24"/>
        <end position="82"/>
    </location>
</feature>
<feature type="peptide" id="PRO_0000012536" description="Gonadoliberin-3">
    <location>
        <begin position="24"/>
        <end position="33"/>
    </location>
</feature>
<feature type="peptide" id="PRO_0000012537" description="GnRH-associated peptide 3">
    <location>
        <begin position="37"/>
        <end position="82"/>
    </location>
</feature>
<feature type="modified residue" description="Pyrrolidone carboxylic acid" evidence="1">
    <location>
        <position position="24"/>
    </location>
</feature>
<feature type="modified residue" description="Glycine amide" evidence="1">
    <location>
        <position position="33"/>
    </location>
</feature>
<accession>P69108</accession>
<accession>P35629</accession>
<accession>P51920</accession>
<dbReference type="EMBL" id="X79712">
    <property type="protein sequence ID" value="CAA56151.1"/>
    <property type="molecule type" value="Genomic_DNA"/>
</dbReference>
<dbReference type="PIR" id="I51331">
    <property type="entry name" value="I51331"/>
</dbReference>
<dbReference type="GO" id="GO:0005615">
    <property type="term" value="C:extracellular space"/>
    <property type="evidence" value="ECO:0000250"/>
    <property type="project" value="UniProtKB"/>
</dbReference>
<dbReference type="GO" id="GO:0005183">
    <property type="term" value="F:gonadotropin hormone-releasing hormone activity"/>
    <property type="evidence" value="ECO:0007669"/>
    <property type="project" value="TreeGrafter"/>
</dbReference>
<dbReference type="GO" id="GO:0031530">
    <property type="term" value="F:gonadotropin-releasing hormone receptor binding"/>
    <property type="evidence" value="ECO:0007669"/>
    <property type="project" value="TreeGrafter"/>
</dbReference>
<dbReference type="InterPro" id="IPR002012">
    <property type="entry name" value="GnRH"/>
</dbReference>
<dbReference type="InterPro" id="IPR019792">
    <property type="entry name" value="Gonadoliberin"/>
</dbReference>
<dbReference type="PANTHER" id="PTHR10522">
    <property type="entry name" value="GONADOLIBERIN"/>
    <property type="match status" value="1"/>
</dbReference>
<dbReference type="PANTHER" id="PTHR10522:SF6">
    <property type="entry name" value="PROGONADOLIBERIN-2"/>
    <property type="match status" value="1"/>
</dbReference>
<dbReference type="Pfam" id="PF00446">
    <property type="entry name" value="GnRH"/>
    <property type="match status" value="1"/>
</dbReference>
<dbReference type="PROSITE" id="PS00473">
    <property type="entry name" value="GNRH"/>
    <property type="match status" value="1"/>
</dbReference>